<proteinExistence type="inferred from homology"/>
<sequence length="493" mass="53841">MANYFNTLNLRQQLAQLGKCRFMQRAEFADGCDVLKGKKVVIVGCGAQGLNQGLNMRDSGLDISYTLRKAAITEKRASWQKATDNGFAVGTYEELIPTADLVLNLTPDKQHSDVVKTVMPLMKQGAALGYSHGFNVVEEGQQIRADITVVMVAPKCPGTEVREEYKRGFGVPTLLAVHPENDPKGVGMAIAKAWASATGGDRAGVLESSFVAEVKSDLMGEQTILCGMLQAGSLLCYDKLVAEGTDPAYAGKLIQFGWETITEALKQGGISLMMDRLSNPAKLRAFELSEQLRTLMRPLFEKHMDDIIAGEFSRGMMADWAEDDAKLFGWREETGKSAFENALAFAGKIAEQEYFDNGVVMVAMVKAGVELAFETMVASGIYEESAYYESLHELPLIANTVARKRLYEMNVVISDTAEYGNYLFANAAVPLLREHFMPTLKAGDLGASKAEGQNVDNLALLAANEATRNHPIEKIGQVLRGYMKDMKRIAVGG</sequence>
<keyword id="KW-0028">Amino-acid biosynthesis</keyword>
<keyword id="KW-0100">Branched-chain amino acid biosynthesis</keyword>
<keyword id="KW-0460">Magnesium</keyword>
<keyword id="KW-0479">Metal-binding</keyword>
<keyword id="KW-0521">NADP</keyword>
<keyword id="KW-0560">Oxidoreductase</keyword>
<keyword id="KW-0677">Repeat</keyword>
<protein>
    <recommendedName>
        <fullName evidence="1">Ketol-acid reductoisomerase (NADP(+))</fullName>
        <shortName evidence="1">KARI</shortName>
        <ecNumber evidence="1">1.1.1.86</ecNumber>
    </recommendedName>
    <alternativeName>
        <fullName evidence="1">Acetohydroxy-acid isomeroreductase</fullName>
        <shortName evidence="1">AHIR</shortName>
    </alternativeName>
    <alternativeName>
        <fullName evidence="1">Alpha-keto-beta-hydroxylacyl reductoisomerase</fullName>
    </alternativeName>
    <alternativeName>
        <fullName evidence="1">Ketol-acid reductoisomerase type 2</fullName>
    </alternativeName>
    <alternativeName>
        <fullName evidence="1">Ketol-acid reductoisomerase type II</fullName>
    </alternativeName>
</protein>
<reference key="1">
    <citation type="journal article" date="2008" name="BMC Genomics">
        <title>The genome of Aeromonas salmonicida subsp. salmonicida A449: insights into the evolution of a fish pathogen.</title>
        <authorList>
            <person name="Reith M.E."/>
            <person name="Singh R.K."/>
            <person name="Curtis B."/>
            <person name="Boyd J.M."/>
            <person name="Bouevitch A."/>
            <person name="Kimball J."/>
            <person name="Munholland J."/>
            <person name="Murphy C."/>
            <person name="Sarty D."/>
            <person name="Williams J."/>
            <person name="Nash J.H."/>
            <person name="Johnson S.C."/>
            <person name="Brown L.L."/>
        </authorList>
    </citation>
    <scope>NUCLEOTIDE SEQUENCE [LARGE SCALE GENOMIC DNA]</scope>
    <source>
        <strain>A449</strain>
    </source>
</reference>
<name>ILVC_AERS4</name>
<feature type="chain" id="PRO_1000050475" description="Ketol-acid reductoisomerase (NADP(+))">
    <location>
        <begin position="1"/>
        <end position="493"/>
    </location>
</feature>
<feature type="domain" description="KARI N-terminal Rossmann" evidence="2">
    <location>
        <begin position="15"/>
        <end position="208"/>
    </location>
</feature>
<feature type="domain" description="KARI C-terminal knotted 1" evidence="3">
    <location>
        <begin position="209"/>
        <end position="344"/>
    </location>
</feature>
<feature type="domain" description="KARI C-terminal knotted 2" evidence="3">
    <location>
        <begin position="345"/>
        <end position="486"/>
    </location>
</feature>
<feature type="active site" evidence="1">
    <location>
        <position position="132"/>
    </location>
</feature>
<feature type="binding site" evidence="1">
    <location>
        <begin position="45"/>
        <end position="48"/>
    </location>
    <ligand>
        <name>NADP(+)</name>
        <dbReference type="ChEBI" id="CHEBI:58349"/>
    </ligand>
</feature>
<feature type="binding site" evidence="1">
    <location>
        <position position="68"/>
    </location>
    <ligand>
        <name>NADP(+)</name>
        <dbReference type="ChEBI" id="CHEBI:58349"/>
    </ligand>
</feature>
<feature type="binding site" evidence="1">
    <location>
        <position position="76"/>
    </location>
    <ligand>
        <name>NADP(+)</name>
        <dbReference type="ChEBI" id="CHEBI:58349"/>
    </ligand>
</feature>
<feature type="binding site" evidence="1">
    <location>
        <position position="78"/>
    </location>
    <ligand>
        <name>NADP(+)</name>
        <dbReference type="ChEBI" id="CHEBI:58349"/>
    </ligand>
</feature>
<feature type="binding site" evidence="1">
    <location>
        <begin position="108"/>
        <end position="110"/>
    </location>
    <ligand>
        <name>NADP(+)</name>
        <dbReference type="ChEBI" id="CHEBI:58349"/>
    </ligand>
</feature>
<feature type="binding site" evidence="1">
    <location>
        <position position="158"/>
    </location>
    <ligand>
        <name>NADP(+)</name>
        <dbReference type="ChEBI" id="CHEBI:58349"/>
    </ligand>
</feature>
<feature type="binding site" evidence="1">
    <location>
        <position position="217"/>
    </location>
    <ligand>
        <name>Mg(2+)</name>
        <dbReference type="ChEBI" id="CHEBI:18420"/>
        <label>1</label>
    </ligand>
</feature>
<feature type="binding site" evidence="1">
    <location>
        <position position="217"/>
    </location>
    <ligand>
        <name>Mg(2+)</name>
        <dbReference type="ChEBI" id="CHEBI:18420"/>
        <label>2</label>
    </ligand>
</feature>
<feature type="binding site" evidence="1">
    <location>
        <position position="221"/>
    </location>
    <ligand>
        <name>Mg(2+)</name>
        <dbReference type="ChEBI" id="CHEBI:18420"/>
        <label>1</label>
    </ligand>
</feature>
<feature type="binding site" evidence="1">
    <location>
        <position position="389"/>
    </location>
    <ligand>
        <name>Mg(2+)</name>
        <dbReference type="ChEBI" id="CHEBI:18420"/>
        <label>2</label>
    </ligand>
</feature>
<feature type="binding site" evidence="1">
    <location>
        <position position="393"/>
    </location>
    <ligand>
        <name>Mg(2+)</name>
        <dbReference type="ChEBI" id="CHEBI:18420"/>
        <label>2</label>
    </ligand>
</feature>
<feature type="binding site" evidence="1">
    <location>
        <position position="414"/>
    </location>
    <ligand>
        <name>substrate</name>
    </ligand>
</feature>
<accession>A4STE2</accession>
<evidence type="ECO:0000255" key="1">
    <source>
        <dbReference type="HAMAP-Rule" id="MF_00435"/>
    </source>
</evidence>
<evidence type="ECO:0000255" key="2">
    <source>
        <dbReference type="PROSITE-ProRule" id="PRU01197"/>
    </source>
</evidence>
<evidence type="ECO:0000255" key="3">
    <source>
        <dbReference type="PROSITE-ProRule" id="PRU01198"/>
    </source>
</evidence>
<comment type="function">
    <text evidence="1">Involved in the biosynthesis of branched-chain amino acids (BCAA). Catalyzes an alkyl-migration followed by a ketol-acid reduction of (S)-2-acetolactate (S2AL) to yield (R)-2,3-dihydroxy-isovalerate. In the isomerase reaction, S2AL is rearranged via a Mg-dependent methyl migration to produce 3-hydroxy-3-methyl-2-ketobutyrate (HMKB). In the reductase reaction, this 2-ketoacid undergoes a metal-dependent reduction by NADPH to yield (R)-2,3-dihydroxy-isovalerate.</text>
</comment>
<comment type="catalytic activity">
    <reaction evidence="1">
        <text>(2R)-2,3-dihydroxy-3-methylbutanoate + NADP(+) = (2S)-2-acetolactate + NADPH + H(+)</text>
        <dbReference type="Rhea" id="RHEA:22068"/>
        <dbReference type="ChEBI" id="CHEBI:15378"/>
        <dbReference type="ChEBI" id="CHEBI:49072"/>
        <dbReference type="ChEBI" id="CHEBI:57783"/>
        <dbReference type="ChEBI" id="CHEBI:58349"/>
        <dbReference type="ChEBI" id="CHEBI:58476"/>
        <dbReference type="EC" id="1.1.1.86"/>
    </reaction>
</comment>
<comment type="catalytic activity">
    <reaction evidence="1">
        <text>(2R,3R)-2,3-dihydroxy-3-methylpentanoate + NADP(+) = (S)-2-ethyl-2-hydroxy-3-oxobutanoate + NADPH + H(+)</text>
        <dbReference type="Rhea" id="RHEA:13493"/>
        <dbReference type="ChEBI" id="CHEBI:15378"/>
        <dbReference type="ChEBI" id="CHEBI:49256"/>
        <dbReference type="ChEBI" id="CHEBI:49258"/>
        <dbReference type="ChEBI" id="CHEBI:57783"/>
        <dbReference type="ChEBI" id="CHEBI:58349"/>
        <dbReference type="EC" id="1.1.1.86"/>
    </reaction>
</comment>
<comment type="cofactor">
    <cofactor evidence="1">
        <name>Mg(2+)</name>
        <dbReference type="ChEBI" id="CHEBI:18420"/>
    </cofactor>
    <text evidence="1">Binds 2 magnesium ions per subunit.</text>
</comment>
<comment type="pathway">
    <text evidence="1">Amino-acid biosynthesis; L-isoleucine biosynthesis; L-isoleucine from 2-oxobutanoate: step 2/4.</text>
</comment>
<comment type="pathway">
    <text evidence="1">Amino-acid biosynthesis; L-valine biosynthesis; L-valine from pyruvate: step 2/4.</text>
</comment>
<comment type="similarity">
    <text evidence="1">Belongs to the ketol-acid reductoisomerase family.</text>
</comment>
<organism>
    <name type="scientific">Aeromonas salmonicida (strain A449)</name>
    <dbReference type="NCBI Taxonomy" id="382245"/>
    <lineage>
        <taxon>Bacteria</taxon>
        <taxon>Pseudomonadati</taxon>
        <taxon>Pseudomonadota</taxon>
        <taxon>Gammaproteobacteria</taxon>
        <taxon>Aeromonadales</taxon>
        <taxon>Aeromonadaceae</taxon>
        <taxon>Aeromonas</taxon>
    </lineage>
</organism>
<dbReference type="EC" id="1.1.1.86" evidence="1"/>
<dbReference type="EMBL" id="CP000644">
    <property type="protein sequence ID" value="ABO92164.1"/>
    <property type="molecule type" value="Genomic_DNA"/>
</dbReference>
<dbReference type="RefSeq" id="WP_005321300.1">
    <property type="nucleotide sequence ID" value="NC_009348.1"/>
</dbReference>
<dbReference type="SMR" id="A4STE2"/>
<dbReference type="STRING" id="29491.GCA_000820065_04495"/>
<dbReference type="KEGG" id="asa:ASA_4236"/>
<dbReference type="PATRIC" id="fig|382245.13.peg.4204"/>
<dbReference type="eggNOG" id="COG0059">
    <property type="taxonomic scope" value="Bacteria"/>
</dbReference>
<dbReference type="HOGENOM" id="CLU_551905_0_0_6"/>
<dbReference type="UniPathway" id="UPA00047">
    <property type="reaction ID" value="UER00056"/>
</dbReference>
<dbReference type="UniPathway" id="UPA00049">
    <property type="reaction ID" value="UER00060"/>
</dbReference>
<dbReference type="Proteomes" id="UP000000225">
    <property type="component" value="Chromosome"/>
</dbReference>
<dbReference type="GO" id="GO:0005829">
    <property type="term" value="C:cytosol"/>
    <property type="evidence" value="ECO:0007669"/>
    <property type="project" value="TreeGrafter"/>
</dbReference>
<dbReference type="GO" id="GO:0004455">
    <property type="term" value="F:ketol-acid reductoisomerase activity"/>
    <property type="evidence" value="ECO:0007669"/>
    <property type="project" value="UniProtKB-UniRule"/>
</dbReference>
<dbReference type="GO" id="GO:0000287">
    <property type="term" value="F:magnesium ion binding"/>
    <property type="evidence" value="ECO:0007669"/>
    <property type="project" value="UniProtKB-UniRule"/>
</dbReference>
<dbReference type="GO" id="GO:0009097">
    <property type="term" value="P:isoleucine biosynthetic process"/>
    <property type="evidence" value="ECO:0007669"/>
    <property type="project" value="UniProtKB-UniRule"/>
</dbReference>
<dbReference type="GO" id="GO:0009099">
    <property type="term" value="P:L-valine biosynthetic process"/>
    <property type="evidence" value="ECO:0007669"/>
    <property type="project" value="UniProtKB-UniRule"/>
</dbReference>
<dbReference type="FunFam" id="1.10.1040.10:FF:000007">
    <property type="entry name" value="Ketol-acid reductoisomerase (NADP(+))"/>
    <property type="match status" value="1"/>
</dbReference>
<dbReference type="FunFam" id="3.40.50.720:FF:000043">
    <property type="entry name" value="Ketol-acid reductoisomerase (NADP(+))"/>
    <property type="match status" value="1"/>
</dbReference>
<dbReference type="Gene3D" id="1.10.1040.10">
    <property type="entry name" value="N-(1-d-carboxylethyl)-l-norvaline Dehydrogenase, domain 2"/>
    <property type="match status" value="1"/>
</dbReference>
<dbReference type="Gene3D" id="3.40.50.720">
    <property type="entry name" value="NAD(P)-binding Rossmann-like Domain"/>
    <property type="match status" value="1"/>
</dbReference>
<dbReference type="HAMAP" id="MF_00435">
    <property type="entry name" value="IlvC"/>
    <property type="match status" value="1"/>
</dbReference>
<dbReference type="InterPro" id="IPR008927">
    <property type="entry name" value="6-PGluconate_DH-like_C_sf"/>
</dbReference>
<dbReference type="InterPro" id="IPR013328">
    <property type="entry name" value="6PGD_dom2"/>
</dbReference>
<dbReference type="InterPro" id="IPR013023">
    <property type="entry name" value="KARI"/>
</dbReference>
<dbReference type="InterPro" id="IPR000506">
    <property type="entry name" value="KARI_C"/>
</dbReference>
<dbReference type="InterPro" id="IPR013116">
    <property type="entry name" value="KARI_N"/>
</dbReference>
<dbReference type="InterPro" id="IPR036291">
    <property type="entry name" value="NAD(P)-bd_dom_sf"/>
</dbReference>
<dbReference type="NCBIfam" id="TIGR00465">
    <property type="entry name" value="ilvC"/>
    <property type="match status" value="1"/>
</dbReference>
<dbReference type="NCBIfam" id="NF003557">
    <property type="entry name" value="PRK05225.1"/>
    <property type="match status" value="1"/>
</dbReference>
<dbReference type="PANTHER" id="PTHR21371">
    <property type="entry name" value="KETOL-ACID REDUCTOISOMERASE, MITOCHONDRIAL"/>
    <property type="match status" value="1"/>
</dbReference>
<dbReference type="PANTHER" id="PTHR21371:SF1">
    <property type="entry name" value="KETOL-ACID REDUCTOISOMERASE, MITOCHONDRIAL"/>
    <property type="match status" value="1"/>
</dbReference>
<dbReference type="Pfam" id="PF01450">
    <property type="entry name" value="KARI_C"/>
    <property type="match status" value="2"/>
</dbReference>
<dbReference type="Pfam" id="PF07991">
    <property type="entry name" value="KARI_N"/>
    <property type="match status" value="1"/>
</dbReference>
<dbReference type="SUPFAM" id="SSF48179">
    <property type="entry name" value="6-phosphogluconate dehydrogenase C-terminal domain-like"/>
    <property type="match status" value="2"/>
</dbReference>
<dbReference type="SUPFAM" id="SSF51735">
    <property type="entry name" value="NAD(P)-binding Rossmann-fold domains"/>
    <property type="match status" value="1"/>
</dbReference>
<dbReference type="PROSITE" id="PS51851">
    <property type="entry name" value="KARI_C"/>
    <property type="match status" value="2"/>
</dbReference>
<dbReference type="PROSITE" id="PS51850">
    <property type="entry name" value="KARI_N"/>
    <property type="match status" value="1"/>
</dbReference>
<gene>
    <name evidence="1" type="primary">ilvC</name>
    <name type="ordered locus">ASA_4236</name>
</gene>